<sequence length="727" mass="79412">MLRIPVKRALIGLSKSPKGYVRSTGTAASNLIEVFVDGQSVMVEPGTTVLQACEKVGMQIPRFCYHERLSVAGNCRMCLVEIEKAPKVVAACAMPVMKGWNILTNSEKSKKAREGVMEFLLANHPLDCPICDQGGECDLQDQSMMFGSDRSRFLEGKRAVEDKNIGPLVKTIMTRCIQCTRCIRFASEIAGVDDLGTTGRGNDMQVGTYIEKMFMSELSGNIIDICPVGALTSKPYAFTARPWETRKTESIDVMDAVGSNIVVSTRTGEVMRILPRMHEDINEEWISDKTRFAYDGLKRQRLTEPMVRNEKGLLTYTSWEDALSRVAGMLQSFEGKAVAAIAGGLVDAEALVALKDLLNKVDSDTLCTEEIFPNEGAGTDLRSNYLLNTTIAGVEEADVVLLVGTNPRFEAPLFNARIRKSWLHNDLKVALIGSPVDLTYRYDHLGDSPKILQDIASGNHEFSKVLNAAKKPMVVLGSSALQRDDGAAILAAVSSIAQKIRVASGAAAEWKVMNILHRIASQVAALDLGYKPGVEAIRKNPPKLLFLLGADGGCITRQDLPKDCFIVYQGHHGDVGAPIADVILPGAAYTEKSATYVNTEGRAQQTKVAVTPPGLAREDWKIIRALSEIAGITLPYDTLDQVRNRLGEVSPNLVRYDDVEEANYFQQASELAKLVDQEFLADPLVPPQLTIKDFYMTDSISRASQTMAKCVKAVTEGAQAVEEPSIC</sequence>
<name>NDUS1_RAT</name>
<accession>Q66HF1</accession>
<evidence type="ECO:0000250" key="1">
    <source>
        <dbReference type="UniProtKB" id="P15690"/>
    </source>
</evidence>
<evidence type="ECO:0000250" key="2">
    <source>
        <dbReference type="UniProtKB" id="P28331"/>
    </source>
</evidence>
<evidence type="ECO:0000250" key="3">
    <source>
        <dbReference type="UniProtKB" id="Q56223"/>
    </source>
</evidence>
<evidence type="ECO:0000250" key="4">
    <source>
        <dbReference type="UniProtKB" id="Q91VD9"/>
    </source>
</evidence>
<evidence type="ECO:0000255" key="5">
    <source>
        <dbReference type="PROSITE-ProRule" id="PRU00465"/>
    </source>
</evidence>
<evidence type="ECO:0000255" key="6">
    <source>
        <dbReference type="PROSITE-ProRule" id="PRU01004"/>
    </source>
</evidence>
<evidence type="ECO:0000255" key="7">
    <source>
        <dbReference type="PROSITE-ProRule" id="PRU01184"/>
    </source>
</evidence>
<evidence type="ECO:0000305" key="8"/>
<comment type="function">
    <text evidence="2">Core subunit of the mitochondrial membrane respiratory chain NADH dehydrogenase (Complex I) which catalyzes electron transfer from NADH through the respiratory chain, using ubiquinone as an electron acceptor (By similarity). Essential for catalysing the entry and efficient transfer of electrons within complex I (By similarity). Plays a key role in the assembly and stability of complex I and participates in the association of complex I with ubiquinol-cytochrome reductase complex (Complex III) to form supercomplexes (By similarity).</text>
</comment>
<comment type="catalytic activity">
    <reaction evidence="2">
        <text>a ubiquinone + NADH + 5 H(+)(in) = a ubiquinol + NAD(+) + 4 H(+)(out)</text>
        <dbReference type="Rhea" id="RHEA:29091"/>
        <dbReference type="Rhea" id="RHEA-COMP:9565"/>
        <dbReference type="Rhea" id="RHEA-COMP:9566"/>
        <dbReference type="ChEBI" id="CHEBI:15378"/>
        <dbReference type="ChEBI" id="CHEBI:16389"/>
        <dbReference type="ChEBI" id="CHEBI:17976"/>
        <dbReference type="ChEBI" id="CHEBI:57540"/>
        <dbReference type="ChEBI" id="CHEBI:57945"/>
        <dbReference type="EC" id="7.1.1.2"/>
    </reaction>
</comment>
<comment type="cofactor">
    <cofactor evidence="3">
        <name>[2Fe-2S] cluster</name>
        <dbReference type="ChEBI" id="CHEBI:190135"/>
    </cofactor>
    <text evidence="3">Binds 1 [2Fe-2S] cluster per subunit.</text>
</comment>
<comment type="cofactor">
    <cofactor evidence="3">
        <name>[4Fe-4S] cluster</name>
        <dbReference type="ChEBI" id="CHEBI:49883"/>
    </cofactor>
    <text evidence="3">Binds 2 [4Fe-4S] clusters per subunit.</text>
</comment>
<comment type="subunit">
    <text evidence="1 2 4">Core subunit of respiratory chain NADH dehydrogenase (Complex I) which is composed of 45 different subunits (By similarity). This is the largest subunit of complex I and it is a component of the iron-sulfur (IP) fragment of the enzyme (By similarity). Complex I associates with ubiquinol-cytochrome reductase complex (Complex III) to form supercomplexes (By similarity). Interacts with MDM2 and AKAP1 (By similarity).</text>
</comment>
<comment type="subcellular location">
    <subcellularLocation>
        <location evidence="1">Mitochondrion inner membrane</location>
        <topology evidence="1">Peripheral membrane protein</topology>
        <orientation evidence="1">Matrix side</orientation>
    </subcellularLocation>
</comment>
<comment type="similarity">
    <text evidence="8">Belongs to the complex I 75 kDa subunit family.</text>
</comment>
<dbReference type="EC" id="7.1.1.2" evidence="2"/>
<dbReference type="EMBL" id="BC081892">
    <property type="protein sequence ID" value="AAH81892.1"/>
    <property type="molecule type" value="mRNA"/>
</dbReference>
<dbReference type="RefSeq" id="NP_001005550.1">
    <property type="nucleotide sequence ID" value="NM_001005550.1"/>
</dbReference>
<dbReference type="SMR" id="Q66HF1"/>
<dbReference type="BioGRID" id="256969">
    <property type="interactions" value="4"/>
</dbReference>
<dbReference type="FunCoup" id="Q66HF1">
    <property type="interactions" value="2320"/>
</dbReference>
<dbReference type="IntAct" id="Q66HF1">
    <property type="interactions" value="3"/>
</dbReference>
<dbReference type="MINT" id="Q66HF1"/>
<dbReference type="STRING" id="10116.ENSRNOP00000015851"/>
<dbReference type="CarbonylDB" id="Q66HF1"/>
<dbReference type="GlyGen" id="Q66HF1">
    <property type="glycosylation" value="9 sites, 1 O-linked glycan (8 sites)"/>
</dbReference>
<dbReference type="iPTMnet" id="Q66HF1"/>
<dbReference type="PhosphoSitePlus" id="Q66HF1"/>
<dbReference type="SwissPalm" id="Q66HF1"/>
<dbReference type="jPOST" id="Q66HF1"/>
<dbReference type="PaxDb" id="10116-ENSRNOP00000015851"/>
<dbReference type="Ensembl" id="ENSRNOT00000104288.1">
    <property type="protein sequence ID" value="ENSRNOP00000087012.1"/>
    <property type="gene ID" value="ENSRNOG00000011849.7"/>
</dbReference>
<dbReference type="GeneID" id="301458"/>
<dbReference type="KEGG" id="rno:301458"/>
<dbReference type="UCSC" id="RGD:1359670">
    <property type="organism name" value="rat"/>
</dbReference>
<dbReference type="AGR" id="RGD:1359670"/>
<dbReference type="CTD" id="4719"/>
<dbReference type="RGD" id="1359670">
    <property type="gene designation" value="Ndufs1"/>
</dbReference>
<dbReference type="eggNOG" id="KOG2282">
    <property type="taxonomic scope" value="Eukaryota"/>
</dbReference>
<dbReference type="GeneTree" id="ENSGT00940000153514"/>
<dbReference type="HOGENOM" id="CLU_000422_11_6_1"/>
<dbReference type="InParanoid" id="Q66HF1"/>
<dbReference type="OMA" id="QAMAYGV"/>
<dbReference type="OrthoDB" id="10249365at2759"/>
<dbReference type="PhylomeDB" id="Q66HF1"/>
<dbReference type="TreeFam" id="TF105756"/>
<dbReference type="Reactome" id="R-RNO-611105">
    <property type="pathway name" value="Respiratory electron transport"/>
</dbReference>
<dbReference type="Reactome" id="R-RNO-6799198">
    <property type="pathway name" value="Complex I biogenesis"/>
</dbReference>
<dbReference type="Reactome" id="R-RNO-9837999">
    <property type="pathway name" value="Mitochondrial protein degradation"/>
</dbReference>
<dbReference type="PRO" id="PR:Q66HF1"/>
<dbReference type="Proteomes" id="UP000002494">
    <property type="component" value="Chromosome 9"/>
</dbReference>
<dbReference type="Bgee" id="ENSRNOG00000011849">
    <property type="expression patterns" value="Expressed in heart and 20 other cell types or tissues"/>
</dbReference>
<dbReference type="GO" id="GO:0005743">
    <property type="term" value="C:mitochondrial inner membrane"/>
    <property type="evidence" value="ECO:0000250"/>
    <property type="project" value="UniProtKB"/>
</dbReference>
<dbReference type="GO" id="GO:0005758">
    <property type="term" value="C:mitochondrial intermembrane space"/>
    <property type="evidence" value="ECO:0000250"/>
    <property type="project" value="UniProtKB"/>
</dbReference>
<dbReference type="GO" id="GO:0005739">
    <property type="term" value="C:mitochondrion"/>
    <property type="evidence" value="ECO:0000250"/>
    <property type="project" value="UniProtKB"/>
</dbReference>
<dbReference type="GO" id="GO:0045271">
    <property type="term" value="C:respiratory chain complex I"/>
    <property type="evidence" value="ECO:0000250"/>
    <property type="project" value="UniProtKB"/>
</dbReference>
<dbReference type="GO" id="GO:0051537">
    <property type="term" value="F:2 iron, 2 sulfur cluster binding"/>
    <property type="evidence" value="ECO:0007669"/>
    <property type="project" value="UniProtKB-KW"/>
</dbReference>
<dbReference type="GO" id="GO:0051539">
    <property type="term" value="F:4 iron, 4 sulfur cluster binding"/>
    <property type="evidence" value="ECO:0007669"/>
    <property type="project" value="UniProtKB-KW"/>
</dbReference>
<dbReference type="GO" id="GO:0009055">
    <property type="term" value="F:electron transfer activity"/>
    <property type="evidence" value="ECO:0000266"/>
    <property type="project" value="RGD"/>
</dbReference>
<dbReference type="GO" id="GO:0046872">
    <property type="term" value="F:metal ion binding"/>
    <property type="evidence" value="ECO:0007669"/>
    <property type="project" value="UniProtKB-KW"/>
</dbReference>
<dbReference type="GO" id="GO:0008137">
    <property type="term" value="F:NADH dehydrogenase (ubiquinone) activity"/>
    <property type="evidence" value="ECO:0000250"/>
    <property type="project" value="UniProtKB"/>
</dbReference>
<dbReference type="GO" id="GO:0045333">
    <property type="term" value="P:cellular respiration"/>
    <property type="evidence" value="ECO:0000266"/>
    <property type="project" value="RGD"/>
</dbReference>
<dbReference type="GO" id="GO:0006120">
    <property type="term" value="P:mitochondrial electron transport, NADH to ubiquinone"/>
    <property type="evidence" value="ECO:0000250"/>
    <property type="project" value="UniProtKB"/>
</dbReference>
<dbReference type="GO" id="GO:0032981">
    <property type="term" value="P:mitochondrial respiratory chain complex I assembly"/>
    <property type="evidence" value="ECO:0000250"/>
    <property type="project" value="UniProtKB"/>
</dbReference>
<dbReference type="CDD" id="cd00207">
    <property type="entry name" value="fer2"/>
    <property type="match status" value="1"/>
</dbReference>
<dbReference type="CDD" id="cd02773">
    <property type="entry name" value="MopB_Res-Cmplx1_Nad11"/>
    <property type="match status" value="1"/>
</dbReference>
<dbReference type="FunFam" id="3.10.20.740:FF:000001">
    <property type="entry name" value="NADH-quinone oxidoreductase subunit G"/>
    <property type="match status" value="1"/>
</dbReference>
<dbReference type="FunFam" id="3.30.200.210:FF:000002">
    <property type="entry name" value="NADH-ubiquinone oxidoreductase 75 kDa subunit"/>
    <property type="match status" value="1"/>
</dbReference>
<dbReference type="FunFam" id="3.30.70.20:FF:000002">
    <property type="entry name" value="NADH-ubiquinone oxidoreductase 75 kDa subunit"/>
    <property type="match status" value="1"/>
</dbReference>
<dbReference type="FunFam" id="3.40.50.740:FF:000002">
    <property type="entry name" value="NADH-ubiquinone oxidoreductase 75 kDa subunit, mitochondrial"/>
    <property type="match status" value="1"/>
</dbReference>
<dbReference type="Gene3D" id="3.10.20.740">
    <property type="match status" value="1"/>
</dbReference>
<dbReference type="Gene3D" id="3.30.200.210">
    <property type="match status" value="1"/>
</dbReference>
<dbReference type="Gene3D" id="3.30.70.20">
    <property type="match status" value="1"/>
</dbReference>
<dbReference type="Gene3D" id="3.40.50.740">
    <property type="match status" value="1"/>
</dbReference>
<dbReference type="InterPro" id="IPR036010">
    <property type="entry name" value="2Fe-2S_ferredoxin-like_sf"/>
</dbReference>
<dbReference type="InterPro" id="IPR001041">
    <property type="entry name" value="2Fe-2S_ferredoxin-type"/>
</dbReference>
<dbReference type="InterPro" id="IPR006656">
    <property type="entry name" value="Mopterin_OxRdtase"/>
</dbReference>
<dbReference type="InterPro" id="IPR006963">
    <property type="entry name" value="Mopterin_OxRdtase_4Fe-4S_dom"/>
</dbReference>
<dbReference type="InterPro" id="IPR000283">
    <property type="entry name" value="NADH_UbQ_OxRdtase_75kDa_su_CS"/>
</dbReference>
<dbReference type="InterPro" id="IPR054351">
    <property type="entry name" value="NADH_UbQ_OxRdtase_ferredoxin"/>
</dbReference>
<dbReference type="InterPro" id="IPR010228">
    <property type="entry name" value="NADH_UbQ_OxRdtase_Gsu"/>
</dbReference>
<dbReference type="InterPro" id="IPR019574">
    <property type="entry name" value="NADH_UbQ_OxRdtase_Gsu_4Fe4S-bd"/>
</dbReference>
<dbReference type="InterPro" id="IPR015405">
    <property type="entry name" value="NDUFS1-like_C"/>
</dbReference>
<dbReference type="InterPro" id="IPR050123">
    <property type="entry name" value="Prok_molybdopt-oxidoreductase"/>
</dbReference>
<dbReference type="NCBIfam" id="TIGR01973">
    <property type="entry name" value="NuoG"/>
    <property type="match status" value="1"/>
</dbReference>
<dbReference type="PANTHER" id="PTHR43105:SF13">
    <property type="entry name" value="NADH-UBIQUINONE OXIDOREDUCTASE 75 KDA SUBUNIT, MITOCHONDRIAL"/>
    <property type="match status" value="1"/>
</dbReference>
<dbReference type="PANTHER" id="PTHR43105">
    <property type="entry name" value="RESPIRATORY NITRATE REDUCTASE"/>
    <property type="match status" value="1"/>
</dbReference>
<dbReference type="Pfam" id="PF13510">
    <property type="entry name" value="Fer2_4"/>
    <property type="match status" value="1"/>
</dbReference>
<dbReference type="Pfam" id="PF22151">
    <property type="entry name" value="Fer4_NDSU1"/>
    <property type="match status" value="1"/>
</dbReference>
<dbReference type="Pfam" id="PF22117">
    <property type="entry name" value="Fer4_Nqo3"/>
    <property type="match status" value="1"/>
</dbReference>
<dbReference type="Pfam" id="PF00384">
    <property type="entry name" value="Molybdopterin"/>
    <property type="match status" value="1"/>
</dbReference>
<dbReference type="Pfam" id="PF10588">
    <property type="entry name" value="NADH-G_4Fe-4S_3"/>
    <property type="match status" value="1"/>
</dbReference>
<dbReference type="Pfam" id="PF09326">
    <property type="entry name" value="NADH_dhqG_C"/>
    <property type="match status" value="1"/>
</dbReference>
<dbReference type="SMART" id="SM00929">
    <property type="entry name" value="NADH-G_4Fe-4S_3"/>
    <property type="match status" value="1"/>
</dbReference>
<dbReference type="SUPFAM" id="SSF54292">
    <property type="entry name" value="2Fe-2S ferredoxin-like"/>
    <property type="match status" value="1"/>
</dbReference>
<dbReference type="SUPFAM" id="SSF54862">
    <property type="entry name" value="4Fe-4S ferredoxins"/>
    <property type="match status" value="1"/>
</dbReference>
<dbReference type="SUPFAM" id="SSF53706">
    <property type="entry name" value="Formate dehydrogenase/DMSO reductase, domains 1-3"/>
    <property type="match status" value="1"/>
</dbReference>
<dbReference type="PROSITE" id="PS51085">
    <property type="entry name" value="2FE2S_FER_2"/>
    <property type="match status" value="1"/>
</dbReference>
<dbReference type="PROSITE" id="PS51839">
    <property type="entry name" value="4FE4S_HC3"/>
    <property type="match status" value="1"/>
</dbReference>
<dbReference type="PROSITE" id="PS51669">
    <property type="entry name" value="4FE4S_MOW_BIS_MGD"/>
    <property type="match status" value="1"/>
</dbReference>
<dbReference type="PROSITE" id="PS00641">
    <property type="entry name" value="COMPLEX1_75K_1"/>
    <property type="match status" value="1"/>
</dbReference>
<dbReference type="PROSITE" id="PS00642">
    <property type="entry name" value="COMPLEX1_75K_2"/>
    <property type="match status" value="1"/>
</dbReference>
<dbReference type="PROSITE" id="PS00643">
    <property type="entry name" value="COMPLEX1_75K_3"/>
    <property type="match status" value="1"/>
</dbReference>
<proteinExistence type="evidence at protein level"/>
<reference key="1">
    <citation type="journal article" date="2004" name="Genome Res.">
        <title>The status, quality, and expansion of the NIH full-length cDNA project: the Mammalian Gene Collection (MGC).</title>
        <authorList>
            <consortium name="The MGC Project Team"/>
        </authorList>
    </citation>
    <scope>NUCLEOTIDE SEQUENCE [LARGE SCALE MRNA]</scope>
    <source>
        <tissue>Kidney</tissue>
    </source>
</reference>
<reference key="2">
    <citation type="submission" date="2007-04" db="UniProtKB">
        <authorList>
            <person name="Lubec G."/>
            <person name="Afjehi-Sadat L."/>
            <person name="Chen W.-Q."/>
        </authorList>
    </citation>
    <scope>PROTEIN SEQUENCE OF 185-200; 247-266; 429-441; 484-499; 519-528; 544-557 AND 625-643</scope>
    <scope>IDENTIFICATION BY MASS SPECTROMETRY</scope>
    <source>
        <strain>Sprague-Dawley</strain>
        <tissue>Hippocampus</tissue>
        <tissue>Spinal cord</tissue>
    </source>
</reference>
<gene>
    <name type="primary">Ndufs1</name>
</gene>
<organism>
    <name type="scientific">Rattus norvegicus</name>
    <name type="common">Rat</name>
    <dbReference type="NCBI Taxonomy" id="10116"/>
    <lineage>
        <taxon>Eukaryota</taxon>
        <taxon>Metazoa</taxon>
        <taxon>Chordata</taxon>
        <taxon>Craniata</taxon>
        <taxon>Vertebrata</taxon>
        <taxon>Euteleostomi</taxon>
        <taxon>Mammalia</taxon>
        <taxon>Eutheria</taxon>
        <taxon>Euarchontoglires</taxon>
        <taxon>Glires</taxon>
        <taxon>Rodentia</taxon>
        <taxon>Myomorpha</taxon>
        <taxon>Muroidea</taxon>
        <taxon>Muridae</taxon>
        <taxon>Murinae</taxon>
        <taxon>Rattus</taxon>
    </lineage>
</organism>
<protein>
    <recommendedName>
        <fullName>NADH-ubiquinone oxidoreductase 75 kDa subunit, mitochondrial</fullName>
        <ecNumber evidence="2">7.1.1.2</ecNumber>
    </recommendedName>
</protein>
<feature type="transit peptide" description="Mitochondrion" evidence="1">
    <location>
        <begin position="1"/>
        <end position="23"/>
    </location>
</feature>
<feature type="chain" id="PRO_0000271388" description="NADH-ubiquinone oxidoreductase 75 kDa subunit, mitochondrial">
    <location>
        <begin position="24"/>
        <end position="727"/>
    </location>
</feature>
<feature type="domain" description="2Fe-2S ferredoxin-type" evidence="5">
    <location>
        <begin position="30"/>
        <end position="108"/>
    </location>
</feature>
<feature type="domain" description="4Fe-4S His(Cys)3-ligated-type" evidence="7">
    <location>
        <begin position="108"/>
        <end position="147"/>
    </location>
</feature>
<feature type="domain" description="4Fe-4S Mo/W bis-MGD-type" evidence="6">
    <location>
        <begin position="245"/>
        <end position="301"/>
    </location>
</feature>
<feature type="binding site" evidence="5">
    <location>
        <position position="64"/>
    </location>
    <ligand>
        <name>[2Fe-2S] cluster</name>
        <dbReference type="ChEBI" id="CHEBI:190135"/>
    </ligand>
</feature>
<feature type="binding site" evidence="5">
    <location>
        <position position="75"/>
    </location>
    <ligand>
        <name>[2Fe-2S] cluster</name>
        <dbReference type="ChEBI" id="CHEBI:190135"/>
    </ligand>
</feature>
<feature type="binding site" evidence="5">
    <location>
        <position position="78"/>
    </location>
    <ligand>
        <name>[2Fe-2S] cluster</name>
        <dbReference type="ChEBI" id="CHEBI:190135"/>
    </ligand>
</feature>
<feature type="binding site" evidence="5">
    <location>
        <position position="92"/>
    </location>
    <ligand>
        <name>[2Fe-2S] cluster</name>
        <dbReference type="ChEBI" id="CHEBI:190135"/>
    </ligand>
</feature>
<feature type="binding site" evidence="7">
    <location>
        <position position="124"/>
    </location>
    <ligand>
        <name>[4Fe-4S] cluster</name>
        <dbReference type="ChEBI" id="CHEBI:49883"/>
        <label>1</label>
    </ligand>
</feature>
<feature type="binding site" evidence="7">
    <location>
        <position position="128"/>
    </location>
    <ligand>
        <name>[4Fe-4S] cluster</name>
        <dbReference type="ChEBI" id="CHEBI:49883"/>
        <label>1</label>
    </ligand>
</feature>
<feature type="binding site" evidence="7">
    <location>
        <position position="131"/>
    </location>
    <ligand>
        <name>[4Fe-4S] cluster</name>
        <dbReference type="ChEBI" id="CHEBI:49883"/>
        <label>1</label>
    </ligand>
</feature>
<feature type="binding site" evidence="7">
    <location>
        <position position="137"/>
    </location>
    <ligand>
        <name>[4Fe-4S] cluster</name>
        <dbReference type="ChEBI" id="CHEBI:49883"/>
        <label>1</label>
    </ligand>
</feature>
<feature type="binding site" evidence="3">
    <location>
        <position position="176"/>
    </location>
    <ligand>
        <name>[4Fe-4S] cluster</name>
        <dbReference type="ChEBI" id="CHEBI:49883"/>
        <label>2</label>
    </ligand>
</feature>
<feature type="binding site" evidence="3">
    <location>
        <position position="179"/>
    </location>
    <ligand>
        <name>[4Fe-4S] cluster</name>
        <dbReference type="ChEBI" id="CHEBI:49883"/>
        <label>2</label>
    </ligand>
</feature>
<feature type="binding site" evidence="3">
    <location>
        <position position="182"/>
    </location>
    <ligand>
        <name>[4Fe-4S] cluster</name>
        <dbReference type="ChEBI" id="CHEBI:49883"/>
        <label>2</label>
    </ligand>
</feature>
<feature type="binding site" evidence="3">
    <location>
        <position position="226"/>
    </location>
    <ligand>
        <name>[4Fe-4S] cluster</name>
        <dbReference type="ChEBI" id="CHEBI:49883"/>
        <label>2</label>
    </ligand>
</feature>
<feature type="modified residue" description="N6-acetyllysine" evidence="4">
    <location>
        <position position="84"/>
    </location>
</feature>
<feature type="modified residue" description="N6-acetyllysine" evidence="4">
    <location>
        <position position="499"/>
    </location>
</feature>
<feature type="modified residue" description="N6-acetyllysine" evidence="4">
    <location>
        <position position="709"/>
    </location>
</feature>
<keyword id="KW-0001">2Fe-2S</keyword>
<keyword id="KW-0004">4Fe-4S</keyword>
<keyword id="KW-0007">Acetylation</keyword>
<keyword id="KW-0903">Direct protein sequencing</keyword>
<keyword id="KW-0249">Electron transport</keyword>
<keyword id="KW-0408">Iron</keyword>
<keyword id="KW-0411">Iron-sulfur</keyword>
<keyword id="KW-0472">Membrane</keyword>
<keyword id="KW-0479">Metal-binding</keyword>
<keyword id="KW-0496">Mitochondrion</keyword>
<keyword id="KW-0999">Mitochondrion inner membrane</keyword>
<keyword id="KW-0520">NAD</keyword>
<keyword id="KW-0560">Oxidoreductase</keyword>
<keyword id="KW-1185">Reference proteome</keyword>
<keyword id="KW-0679">Respiratory chain</keyword>
<keyword id="KW-0809">Transit peptide</keyword>
<keyword id="KW-1278">Translocase</keyword>
<keyword id="KW-0813">Transport</keyword>
<keyword id="KW-0830">Ubiquinone</keyword>